<accession>B1VAE1</accession>
<organism>
    <name type="scientific">Phytoplasma australiense</name>
    <dbReference type="NCBI Taxonomy" id="59748"/>
    <lineage>
        <taxon>Bacteria</taxon>
        <taxon>Bacillati</taxon>
        <taxon>Mycoplasmatota</taxon>
        <taxon>Mollicutes</taxon>
        <taxon>Acholeplasmatales</taxon>
        <taxon>Acholeplasmataceae</taxon>
        <taxon>Candidatus Phytoplasma</taxon>
        <taxon>16SrXII (Stolbur group)</taxon>
    </lineage>
</organism>
<proteinExistence type="inferred from homology"/>
<evidence type="ECO:0000255" key="1">
    <source>
        <dbReference type="HAMAP-Rule" id="MF_01342"/>
    </source>
</evidence>
<evidence type="ECO:0000305" key="2"/>
<sequence length="140" mass="15850">MLMPKRTKYRRPHRVSFEGKAKGKNVIVNGNYALVAKEGAFITNKQIEACRIAMNRYMKRTGKVWINIFPHLSLTKKPLEVRMGSGKGSPEEWVAVVKTGKVLFEVKDTSNSEKVEMEALRLASHKLPIKTKIVKKGVQV</sequence>
<dbReference type="EMBL" id="AM422018">
    <property type="protein sequence ID" value="CAM11914.1"/>
    <property type="molecule type" value="Genomic_DNA"/>
</dbReference>
<dbReference type="SMR" id="B1VAE1"/>
<dbReference type="STRING" id="59748.PA0580"/>
<dbReference type="KEGG" id="pal:PA0580"/>
<dbReference type="eggNOG" id="COG0197">
    <property type="taxonomic scope" value="Bacteria"/>
</dbReference>
<dbReference type="Proteomes" id="UP000008323">
    <property type="component" value="Chromosome"/>
</dbReference>
<dbReference type="GO" id="GO:0022625">
    <property type="term" value="C:cytosolic large ribosomal subunit"/>
    <property type="evidence" value="ECO:0007669"/>
    <property type="project" value="TreeGrafter"/>
</dbReference>
<dbReference type="GO" id="GO:0019843">
    <property type="term" value="F:rRNA binding"/>
    <property type="evidence" value="ECO:0007669"/>
    <property type="project" value="UniProtKB-UniRule"/>
</dbReference>
<dbReference type="GO" id="GO:0003735">
    <property type="term" value="F:structural constituent of ribosome"/>
    <property type="evidence" value="ECO:0007669"/>
    <property type="project" value="InterPro"/>
</dbReference>
<dbReference type="GO" id="GO:0000049">
    <property type="term" value="F:tRNA binding"/>
    <property type="evidence" value="ECO:0007669"/>
    <property type="project" value="UniProtKB-KW"/>
</dbReference>
<dbReference type="GO" id="GO:0006412">
    <property type="term" value="P:translation"/>
    <property type="evidence" value="ECO:0007669"/>
    <property type="project" value="UniProtKB-UniRule"/>
</dbReference>
<dbReference type="CDD" id="cd01433">
    <property type="entry name" value="Ribosomal_L16_L10e"/>
    <property type="match status" value="1"/>
</dbReference>
<dbReference type="FunFam" id="3.90.1170.10:FF:000001">
    <property type="entry name" value="50S ribosomal protein L16"/>
    <property type="match status" value="1"/>
</dbReference>
<dbReference type="Gene3D" id="3.90.1170.10">
    <property type="entry name" value="Ribosomal protein L10e/L16"/>
    <property type="match status" value="1"/>
</dbReference>
<dbReference type="HAMAP" id="MF_01342">
    <property type="entry name" value="Ribosomal_uL16"/>
    <property type="match status" value="1"/>
</dbReference>
<dbReference type="InterPro" id="IPR047873">
    <property type="entry name" value="Ribosomal_uL16"/>
</dbReference>
<dbReference type="InterPro" id="IPR000114">
    <property type="entry name" value="Ribosomal_uL16_bact-type"/>
</dbReference>
<dbReference type="InterPro" id="IPR020798">
    <property type="entry name" value="Ribosomal_uL16_CS"/>
</dbReference>
<dbReference type="InterPro" id="IPR016180">
    <property type="entry name" value="Ribosomal_uL16_dom"/>
</dbReference>
<dbReference type="InterPro" id="IPR036920">
    <property type="entry name" value="Ribosomal_uL16_sf"/>
</dbReference>
<dbReference type="NCBIfam" id="TIGR01164">
    <property type="entry name" value="rplP_bact"/>
    <property type="match status" value="1"/>
</dbReference>
<dbReference type="PANTHER" id="PTHR12220">
    <property type="entry name" value="50S/60S RIBOSOMAL PROTEIN L16"/>
    <property type="match status" value="1"/>
</dbReference>
<dbReference type="PANTHER" id="PTHR12220:SF13">
    <property type="entry name" value="LARGE RIBOSOMAL SUBUNIT PROTEIN UL16M"/>
    <property type="match status" value="1"/>
</dbReference>
<dbReference type="Pfam" id="PF00252">
    <property type="entry name" value="Ribosomal_L16"/>
    <property type="match status" value="1"/>
</dbReference>
<dbReference type="PRINTS" id="PR00060">
    <property type="entry name" value="RIBOSOMALL16"/>
</dbReference>
<dbReference type="SUPFAM" id="SSF54686">
    <property type="entry name" value="Ribosomal protein L16p/L10e"/>
    <property type="match status" value="1"/>
</dbReference>
<dbReference type="PROSITE" id="PS00586">
    <property type="entry name" value="RIBOSOMAL_L16_1"/>
    <property type="match status" value="1"/>
</dbReference>
<dbReference type="PROSITE" id="PS00701">
    <property type="entry name" value="RIBOSOMAL_L16_2"/>
    <property type="match status" value="1"/>
</dbReference>
<comment type="function">
    <text evidence="1">Binds 23S rRNA and is also seen to make contacts with the A and possibly P site tRNAs.</text>
</comment>
<comment type="subunit">
    <text evidence="1">Part of the 50S ribosomal subunit.</text>
</comment>
<comment type="similarity">
    <text evidence="1">Belongs to the universal ribosomal protein uL16 family.</text>
</comment>
<protein>
    <recommendedName>
        <fullName evidence="1">Large ribosomal subunit protein uL16</fullName>
    </recommendedName>
    <alternativeName>
        <fullName evidence="2">50S ribosomal protein L16</fullName>
    </alternativeName>
</protein>
<feature type="chain" id="PRO_1000143007" description="Large ribosomal subunit protein uL16">
    <location>
        <begin position="1"/>
        <end position="140"/>
    </location>
</feature>
<name>RL16_PHYAS</name>
<keyword id="KW-1185">Reference proteome</keyword>
<keyword id="KW-0687">Ribonucleoprotein</keyword>
<keyword id="KW-0689">Ribosomal protein</keyword>
<keyword id="KW-0694">RNA-binding</keyword>
<keyword id="KW-0699">rRNA-binding</keyword>
<keyword id="KW-0820">tRNA-binding</keyword>
<reference key="1">
    <citation type="journal article" date="2008" name="J. Bacteriol.">
        <title>Comparative genome analysis of 'Candidatus Phytoplasma australiense' (subgroup tuf-Australia I; rp-A) and 'Ca. Phytoplasma asteris' strains OY-M and AY-WB.</title>
        <authorList>
            <person name="Tran-Nguyen L.T."/>
            <person name="Kube M."/>
            <person name="Schneider B."/>
            <person name="Reinhardt R."/>
            <person name="Gibb K.S."/>
        </authorList>
    </citation>
    <scope>NUCLEOTIDE SEQUENCE [LARGE SCALE GENOMIC DNA]</scope>
</reference>
<gene>
    <name evidence="1" type="primary">rplP</name>
    <name type="ordered locus">PA0580</name>
</gene>